<reference key="1">
    <citation type="journal article" date="2008" name="Proc. Natl. Acad. Sci. U.S.A.">
        <title>The genome of Cyanothece 51142, a unicellular diazotrophic cyanobacterium important in the marine nitrogen cycle.</title>
        <authorList>
            <person name="Welsh E.A."/>
            <person name="Liberton M."/>
            <person name="Stoeckel J."/>
            <person name="Loh T."/>
            <person name="Elvitigala T."/>
            <person name="Wang C."/>
            <person name="Wollam A."/>
            <person name="Fulton R.S."/>
            <person name="Clifton S.W."/>
            <person name="Jacobs J.M."/>
            <person name="Aurora R."/>
            <person name="Ghosh B.K."/>
            <person name="Sherman L.A."/>
            <person name="Smith R.D."/>
            <person name="Wilson R.K."/>
            <person name="Pakrasi H.B."/>
        </authorList>
    </citation>
    <scope>NUCLEOTIDE SEQUENCE [LARGE SCALE GENOMIC DNA]</scope>
    <source>
        <strain>ATCC 51142 / BH68</strain>
    </source>
</reference>
<keyword id="KW-0028">Amino-acid biosynthesis</keyword>
<keyword id="KW-0413">Isomerase</keyword>
<keyword id="KW-0486">Methionine biosynthesis</keyword>
<keyword id="KW-1185">Reference proteome</keyword>
<comment type="function">
    <text evidence="1">Catalyzes the interconversion of methylthioribose-1-phosphate (MTR-1-P) into methylthioribulose-1-phosphate (MTRu-1-P).</text>
</comment>
<comment type="catalytic activity">
    <reaction evidence="1">
        <text>5-(methylsulfanyl)-alpha-D-ribose 1-phosphate = 5-(methylsulfanyl)-D-ribulose 1-phosphate</text>
        <dbReference type="Rhea" id="RHEA:19989"/>
        <dbReference type="ChEBI" id="CHEBI:58533"/>
        <dbReference type="ChEBI" id="CHEBI:58548"/>
        <dbReference type="EC" id="5.3.1.23"/>
    </reaction>
</comment>
<comment type="pathway">
    <text evidence="1">Amino-acid biosynthesis; L-methionine biosynthesis via salvage pathway; L-methionine from S-methyl-5-thio-alpha-D-ribose 1-phosphate: step 1/6.</text>
</comment>
<comment type="similarity">
    <text evidence="2">Belongs to the eIF-2B alpha/beta/delta subunits family. MtnA subfamily.</text>
</comment>
<comment type="sequence caution" evidence="2">
    <conflict type="erroneous initiation">
        <sequence resource="EMBL-CDS" id="ACB51683"/>
    </conflict>
</comment>
<sequence length="345" mass="37939">MNTIYPVIWSNNKVLLIDQTSLPSRYTLVEISRYEDMAKAIKTMIVRGAPAIGVAAAYGMYLGARDIQTQDRETFLKHLDKIAQILRQTRPTAVNLFWAISRMLKTAYETLGTVEEIKKILLETAQKIQEEDLQTCQAIGHNSLSILPTNPEKLTILTHCNAGALATAGYGTALGVIRSVWTAGRLNRVFADETRPRLQGAKLTAWECVQEKIPVTVISDNMAAHCMQKGLIDMVVVGADRIAANGDTANKIGTYGLAVIAKMHQVPFYVAAPLSTVDFSLETGDLIPIEERDPSELYQIGNTVIYPDGVDYYNPAFDVTPADLITGIITEQKTVNPKELITLKG</sequence>
<protein>
    <recommendedName>
        <fullName evidence="1">Methylthioribose-1-phosphate isomerase</fullName>
        <shortName evidence="1">M1Pi</shortName>
        <shortName evidence="1">MTR-1-P isomerase</shortName>
        <ecNumber evidence="1">5.3.1.23</ecNumber>
    </recommendedName>
    <alternativeName>
        <fullName evidence="1">S-methyl-5-thioribose-1-phosphate isomerase</fullName>
    </alternativeName>
</protein>
<evidence type="ECO:0000255" key="1">
    <source>
        <dbReference type="HAMAP-Rule" id="MF_01678"/>
    </source>
</evidence>
<evidence type="ECO:0000305" key="2"/>
<accession>B1WQH2</accession>
<organism>
    <name type="scientific">Crocosphaera subtropica (strain ATCC 51142 / BH68)</name>
    <name type="common">Cyanothece sp. (strain ATCC 51142)</name>
    <dbReference type="NCBI Taxonomy" id="43989"/>
    <lineage>
        <taxon>Bacteria</taxon>
        <taxon>Bacillati</taxon>
        <taxon>Cyanobacteriota</taxon>
        <taxon>Cyanophyceae</taxon>
        <taxon>Oscillatoriophycideae</taxon>
        <taxon>Chroococcales</taxon>
        <taxon>Aphanothecaceae</taxon>
        <taxon>Crocosphaera</taxon>
        <taxon>Crocosphaera subtropica</taxon>
    </lineage>
</organism>
<gene>
    <name evidence="1" type="primary">mtnA</name>
    <name type="ordered locus">cce_2333</name>
</gene>
<proteinExistence type="inferred from homology"/>
<name>MTNA_CROS5</name>
<dbReference type="EC" id="5.3.1.23" evidence="1"/>
<dbReference type="EMBL" id="CP000806">
    <property type="protein sequence ID" value="ACB51683.1"/>
    <property type="status" value="ALT_INIT"/>
    <property type="molecule type" value="Genomic_DNA"/>
</dbReference>
<dbReference type="RefSeq" id="WP_035857660.1">
    <property type="nucleotide sequence ID" value="NC_010546.1"/>
</dbReference>
<dbReference type="SMR" id="B1WQH2"/>
<dbReference type="STRING" id="43989.cce_2333"/>
<dbReference type="KEGG" id="cyt:cce_2333"/>
<dbReference type="eggNOG" id="COG0182">
    <property type="taxonomic scope" value="Bacteria"/>
</dbReference>
<dbReference type="HOGENOM" id="CLU_016218_1_2_3"/>
<dbReference type="OrthoDB" id="9803436at2"/>
<dbReference type="UniPathway" id="UPA00904">
    <property type="reaction ID" value="UER00874"/>
</dbReference>
<dbReference type="Proteomes" id="UP000001203">
    <property type="component" value="Chromosome circular"/>
</dbReference>
<dbReference type="GO" id="GO:0046523">
    <property type="term" value="F:S-methyl-5-thioribose-1-phosphate isomerase activity"/>
    <property type="evidence" value="ECO:0007669"/>
    <property type="project" value="UniProtKB-UniRule"/>
</dbReference>
<dbReference type="GO" id="GO:0019509">
    <property type="term" value="P:L-methionine salvage from methylthioadenosine"/>
    <property type="evidence" value="ECO:0007669"/>
    <property type="project" value="UniProtKB-UniRule"/>
</dbReference>
<dbReference type="FunFam" id="3.40.50.10470:FF:000006">
    <property type="entry name" value="Methylthioribose-1-phosphate isomerase"/>
    <property type="match status" value="1"/>
</dbReference>
<dbReference type="FunFam" id="1.20.120.420:FF:000012">
    <property type="entry name" value="Putative methylthioribose-1-phosphate isomerase"/>
    <property type="match status" value="1"/>
</dbReference>
<dbReference type="Gene3D" id="1.20.120.420">
    <property type="entry name" value="translation initiation factor eif-2b, domain 1"/>
    <property type="match status" value="1"/>
</dbReference>
<dbReference type="Gene3D" id="3.40.50.10470">
    <property type="entry name" value="Translation initiation factor eif-2b, domain 2"/>
    <property type="match status" value="1"/>
</dbReference>
<dbReference type="HAMAP" id="MF_01678">
    <property type="entry name" value="Salvage_MtnA"/>
    <property type="match status" value="1"/>
</dbReference>
<dbReference type="InterPro" id="IPR000649">
    <property type="entry name" value="IF-2B-related"/>
</dbReference>
<dbReference type="InterPro" id="IPR005251">
    <property type="entry name" value="IF-M1Pi"/>
</dbReference>
<dbReference type="InterPro" id="IPR042529">
    <property type="entry name" value="IF_2B-like_C"/>
</dbReference>
<dbReference type="InterPro" id="IPR011559">
    <property type="entry name" value="Initiation_fac_2B_a/b/d"/>
</dbReference>
<dbReference type="InterPro" id="IPR027363">
    <property type="entry name" value="M1Pi_N"/>
</dbReference>
<dbReference type="InterPro" id="IPR037171">
    <property type="entry name" value="NagB/RpiA_transferase-like"/>
</dbReference>
<dbReference type="NCBIfam" id="TIGR00524">
    <property type="entry name" value="eIF-2B_rel"/>
    <property type="match status" value="1"/>
</dbReference>
<dbReference type="NCBIfam" id="NF004326">
    <property type="entry name" value="PRK05720.1"/>
    <property type="match status" value="1"/>
</dbReference>
<dbReference type="NCBIfam" id="TIGR00512">
    <property type="entry name" value="salvage_mtnA"/>
    <property type="match status" value="1"/>
</dbReference>
<dbReference type="PANTHER" id="PTHR43475">
    <property type="entry name" value="METHYLTHIORIBOSE-1-PHOSPHATE ISOMERASE"/>
    <property type="match status" value="1"/>
</dbReference>
<dbReference type="PANTHER" id="PTHR43475:SF1">
    <property type="entry name" value="METHYLTHIORIBOSE-1-PHOSPHATE ISOMERASE"/>
    <property type="match status" value="1"/>
</dbReference>
<dbReference type="Pfam" id="PF01008">
    <property type="entry name" value="IF-2B"/>
    <property type="match status" value="1"/>
</dbReference>
<dbReference type="SUPFAM" id="SSF100950">
    <property type="entry name" value="NagB/RpiA/CoA transferase-like"/>
    <property type="match status" value="1"/>
</dbReference>
<feature type="chain" id="PRO_0000357169" description="Methylthioribose-1-phosphate isomerase">
    <location>
        <begin position="1"/>
        <end position="345"/>
    </location>
</feature>
<feature type="active site" description="Proton donor" evidence="1">
    <location>
        <position position="240"/>
    </location>
</feature>
<feature type="binding site" evidence="1">
    <location>
        <begin position="47"/>
        <end position="49"/>
    </location>
    <ligand>
        <name>substrate</name>
    </ligand>
</feature>
<feature type="binding site" evidence="1">
    <location>
        <position position="90"/>
    </location>
    <ligand>
        <name>substrate</name>
    </ligand>
</feature>
<feature type="binding site" evidence="1">
    <location>
        <position position="199"/>
    </location>
    <ligand>
        <name>substrate</name>
    </ligand>
</feature>
<feature type="binding site" evidence="1">
    <location>
        <begin position="250"/>
        <end position="251"/>
    </location>
    <ligand>
        <name>substrate</name>
    </ligand>
</feature>
<feature type="site" description="Transition state stabilizer" evidence="1">
    <location>
        <position position="160"/>
    </location>
</feature>